<organism>
    <name type="scientific">Xanthomonas oryzae pv. oryzae (strain MAFF 311018)</name>
    <dbReference type="NCBI Taxonomy" id="342109"/>
    <lineage>
        <taxon>Bacteria</taxon>
        <taxon>Pseudomonadati</taxon>
        <taxon>Pseudomonadota</taxon>
        <taxon>Gammaproteobacteria</taxon>
        <taxon>Lysobacterales</taxon>
        <taxon>Lysobacteraceae</taxon>
        <taxon>Xanthomonas</taxon>
    </lineage>
</organism>
<evidence type="ECO:0000255" key="1">
    <source>
        <dbReference type="HAMAP-Rule" id="MF_00151"/>
    </source>
</evidence>
<proteinExistence type="inferred from homology"/>
<gene>
    <name evidence="1" type="primary">coaD</name>
    <name type="ordered locus">XOO2372</name>
</gene>
<sequence length="168" mass="18286">MSVANSRTAVYPGTFDPITNGHIDLVNRAAPLFERVVVGVAYSPSKGPALSLERRVALAQEALAAHANVEVRGFDTLLAHFVRQMGAGVLLRGLRAVSDFEYEFQMASMNRHLIPEVETLFLTPSEQYSFISSSLVREIARLGGDVSGFVPASVVEALRQVRESRAQA</sequence>
<protein>
    <recommendedName>
        <fullName evidence="1">Phosphopantetheine adenylyltransferase</fullName>
        <ecNumber evidence="1">2.7.7.3</ecNumber>
    </recommendedName>
    <alternativeName>
        <fullName evidence="1">Dephospho-CoA pyrophosphorylase</fullName>
    </alternativeName>
    <alternativeName>
        <fullName evidence="1">Pantetheine-phosphate adenylyltransferase</fullName>
        <shortName evidence="1">PPAT</shortName>
    </alternativeName>
</protein>
<accession>Q2P2V0</accession>
<reference key="1">
    <citation type="journal article" date="2005" name="Jpn. Agric. Res. Q.">
        <title>Genome sequence of Xanthomonas oryzae pv. oryzae suggests contribution of large numbers of effector genes and insertion sequences to its race diversity.</title>
        <authorList>
            <person name="Ochiai H."/>
            <person name="Inoue Y."/>
            <person name="Takeya M."/>
            <person name="Sasaki A."/>
            <person name="Kaku H."/>
        </authorList>
    </citation>
    <scope>NUCLEOTIDE SEQUENCE [LARGE SCALE GENOMIC DNA]</scope>
    <source>
        <strain>MAFF 311018</strain>
    </source>
</reference>
<comment type="function">
    <text evidence="1">Reversibly transfers an adenylyl group from ATP to 4'-phosphopantetheine, yielding dephospho-CoA (dPCoA) and pyrophosphate.</text>
</comment>
<comment type="catalytic activity">
    <reaction evidence="1">
        <text>(R)-4'-phosphopantetheine + ATP + H(+) = 3'-dephospho-CoA + diphosphate</text>
        <dbReference type="Rhea" id="RHEA:19801"/>
        <dbReference type="ChEBI" id="CHEBI:15378"/>
        <dbReference type="ChEBI" id="CHEBI:30616"/>
        <dbReference type="ChEBI" id="CHEBI:33019"/>
        <dbReference type="ChEBI" id="CHEBI:57328"/>
        <dbReference type="ChEBI" id="CHEBI:61723"/>
        <dbReference type="EC" id="2.7.7.3"/>
    </reaction>
</comment>
<comment type="cofactor">
    <cofactor evidence="1">
        <name>Mg(2+)</name>
        <dbReference type="ChEBI" id="CHEBI:18420"/>
    </cofactor>
</comment>
<comment type="pathway">
    <text evidence="1">Cofactor biosynthesis; coenzyme A biosynthesis; CoA from (R)-pantothenate: step 4/5.</text>
</comment>
<comment type="subunit">
    <text evidence="1">Homohexamer.</text>
</comment>
<comment type="subcellular location">
    <subcellularLocation>
        <location evidence="1">Cytoplasm</location>
    </subcellularLocation>
</comment>
<comment type="similarity">
    <text evidence="1">Belongs to the bacterial CoaD family.</text>
</comment>
<feature type="chain" id="PRO_1000011278" description="Phosphopantetheine adenylyltransferase">
    <location>
        <begin position="1"/>
        <end position="168"/>
    </location>
</feature>
<feature type="binding site" evidence="1">
    <location>
        <begin position="14"/>
        <end position="15"/>
    </location>
    <ligand>
        <name>ATP</name>
        <dbReference type="ChEBI" id="CHEBI:30616"/>
    </ligand>
</feature>
<feature type="binding site" evidence="1">
    <location>
        <position position="14"/>
    </location>
    <ligand>
        <name>substrate</name>
    </ligand>
</feature>
<feature type="binding site" evidence="1">
    <location>
        <position position="22"/>
    </location>
    <ligand>
        <name>ATP</name>
        <dbReference type="ChEBI" id="CHEBI:30616"/>
    </ligand>
</feature>
<feature type="binding site" evidence="1">
    <location>
        <position position="46"/>
    </location>
    <ligand>
        <name>substrate</name>
    </ligand>
</feature>
<feature type="binding site" evidence="1">
    <location>
        <position position="78"/>
    </location>
    <ligand>
        <name>substrate</name>
    </ligand>
</feature>
<feature type="binding site" evidence="1">
    <location>
        <position position="92"/>
    </location>
    <ligand>
        <name>substrate</name>
    </ligand>
</feature>
<feature type="binding site" evidence="1">
    <location>
        <begin position="93"/>
        <end position="95"/>
    </location>
    <ligand>
        <name>ATP</name>
        <dbReference type="ChEBI" id="CHEBI:30616"/>
    </ligand>
</feature>
<feature type="binding site" evidence="1">
    <location>
        <position position="103"/>
    </location>
    <ligand>
        <name>ATP</name>
        <dbReference type="ChEBI" id="CHEBI:30616"/>
    </ligand>
</feature>
<feature type="binding site" evidence="1">
    <location>
        <begin position="128"/>
        <end position="134"/>
    </location>
    <ligand>
        <name>ATP</name>
        <dbReference type="ChEBI" id="CHEBI:30616"/>
    </ligand>
</feature>
<feature type="site" description="Transition state stabilizer" evidence="1">
    <location>
        <position position="22"/>
    </location>
</feature>
<dbReference type="EC" id="2.7.7.3" evidence="1"/>
<dbReference type="EMBL" id="AP008229">
    <property type="protein sequence ID" value="BAE69127.1"/>
    <property type="molecule type" value="Genomic_DNA"/>
</dbReference>
<dbReference type="RefSeq" id="WP_011259147.1">
    <property type="nucleotide sequence ID" value="NC_007705.1"/>
</dbReference>
<dbReference type="SMR" id="Q2P2V0"/>
<dbReference type="GeneID" id="77337933"/>
<dbReference type="KEGG" id="xom:XOO2372"/>
<dbReference type="HOGENOM" id="CLU_100149_0_1_6"/>
<dbReference type="UniPathway" id="UPA00241">
    <property type="reaction ID" value="UER00355"/>
</dbReference>
<dbReference type="GO" id="GO:0005737">
    <property type="term" value="C:cytoplasm"/>
    <property type="evidence" value="ECO:0007669"/>
    <property type="project" value="UniProtKB-SubCell"/>
</dbReference>
<dbReference type="GO" id="GO:0005524">
    <property type="term" value="F:ATP binding"/>
    <property type="evidence" value="ECO:0007669"/>
    <property type="project" value="UniProtKB-KW"/>
</dbReference>
<dbReference type="GO" id="GO:0004595">
    <property type="term" value="F:pantetheine-phosphate adenylyltransferase activity"/>
    <property type="evidence" value="ECO:0007669"/>
    <property type="project" value="UniProtKB-UniRule"/>
</dbReference>
<dbReference type="GO" id="GO:0015937">
    <property type="term" value="P:coenzyme A biosynthetic process"/>
    <property type="evidence" value="ECO:0007669"/>
    <property type="project" value="UniProtKB-UniRule"/>
</dbReference>
<dbReference type="CDD" id="cd02163">
    <property type="entry name" value="PPAT"/>
    <property type="match status" value="1"/>
</dbReference>
<dbReference type="Gene3D" id="3.40.50.620">
    <property type="entry name" value="HUPs"/>
    <property type="match status" value="1"/>
</dbReference>
<dbReference type="HAMAP" id="MF_00151">
    <property type="entry name" value="PPAT_bact"/>
    <property type="match status" value="1"/>
</dbReference>
<dbReference type="InterPro" id="IPR004821">
    <property type="entry name" value="Cyt_trans-like"/>
</dbReference>
<dbReference type="InterPro" id="IPR001980">
    <property type="entry name" value="PPAT"/>
</dbReference>
<dbReference type="InterPro" id="IPR014729">
    <property type="entry name" value="Rossmann-like_a/b/a_fold"/>
</dbReference>
<dbReference type="NCBIfam" id="TIGR01510">
    <property type="entry name" value="coaD_prev_kdtB"/>
    <property type="match status" value="1"/>
</dbReference>
<dbReference type="NCBIfam" id="TIGR00125">
    <property type="entry name" value="cyt_tran_rel"/>
    <property type="match status" value="1"/>
</dbReference>
<dbReference type="PANTHER" id="PTHR21342">
    <property type="entry name" value="PHOSPHOPANTETHEINE ADENYLYLTRANSFERASE"/>
    <property type="match status" value="1"/>
</dbReference>
<dbReference type="PANTHER" id="PTHR21342:SF1">
    <property type="entry name" value="PHOSPHOPANTETHEINE ADENYLYLTRANSFERASE"/>
    <property type="match status" value="1"/>
</dbReference>
<dbReference type="Pfam" id="PF01467">
    <property type="entry name" value="CTP_transf_like"/>
    <property type="match status" value="1"/>
</dbReference>
<dbReference type="PRINTS" id="PR01020">
    <property type="entry name" value="LPSBIOSNTHSS"/>
</dbReference>
<dbReference type="SUPFAM" id="SSF52374">
    <property type="entry name" value="Nucleotidylyl transferase"/>
    <property type="match status" value="1"/>
</dbReference>
<name>COAD_XANOM</name>
<keyword id="KW-0067">ATP-binding</keyword>
<keyword id="KW-0173">Coenzyme A biosynthesis</keyword>
<keyword id="KW-0963">Cytoplasm</keyword>
<keyword id="KW-0460">Magnesium</keyword>
<keyword id="KW-0547">Nucleotide-binding</keyword>
<keyword id="KW-0548">Nucleotidyltransferase</keyword>
<keyword id="KW-0808">Transferase</keyword>